<reference key="1">
    <citation type="journal article" date="2002" name="Nature">
        <title>Genome sequence of the plant pathogen Ralstonia solanacearum.</title>
        <authorList>
            <person name="Salanoubat M."/>
            <person name="Genin S."/>
            <person name="Artiguenave F."/>
            <person name="Gouzy J."/>
            <person name="Mangenot S."/>
            <person name="Arlat M."/>
            <person name="Billault A."/>
            <person name="Brottier P."/>
            <person name="Camus J.-C."/>
            <person name="Cattolico L."/>
            <person name="Chandler M."/>
            <person name="Choisne N."/>
            <person name="Claudel-Renard C."/>
            <person name="Cunnac S."/>
            <person name="Demange N."/>
            <person name="Gaspin C."/>
            <person name="Lavie M."/>
            <person name="Moisan A."/>
            <person name="Robert C."/>
            <person name="Saurin W."/>
            <person name="Schiex T."/>
            <person name="Siguier P."/>
            <person name="Thebault P."/>
            <person name="Whalen M."/>
            <person name="Wincker P."/>
            <person name="Levy M."/>
            <person name="Weissenbach J."/>
            <person name="Boucher C.A."/>
        </authorList>
    </citation>
    <scope>NUCLEOTIDE SEQUENCE [LARGE SCALE GENOMIC DNA]</scope>
    <source>
        <strain>ATCC BAA-1114 / GMI1000</strain>
    </source>
</reference>
<feature type="chain" id="PRO_0000177562" description="Translation initiation factor IF-3">
    <location>
        <begin position="1"/>
        <end position="178"/>
    </location>
</feature>
<organism>
    <name type="scientific">Ralstonia nicotianae (strain ATCC BAA-1114 / GMI1000)</name>
    <name type="common">Ralstonia solanacearum</name>
    <dbReference type="NCBI Taxonomy" id="267608"/>
    <lineage>
        <taxon>Bacteria</taxon>
        <taxon>Pseudomonadati</taxon>
        <taxon>Pseudomonadota</taxon>
        <taxon>Betaproteobacteria</taxon>
        <taxon>Burkholderiales</taxon>
        <taxon>Burkholderiaceae</taxon>
        <taxon>Ralstonia</taxon>
        <taxon>Ralstonia solanacearum species complex</taxon>
    </lineage>
</organism>
<name>IF3_RALN1</name>
<evidence type="ECO:0000255" key="1">
    <source>
        <dbReference type="HAMAP-Rule" id="MF_00080"/>
    </source>
</evidence>
<proteinExistence type="inferred from homology"/>
<gene>
    <name evidence="1" type="primary">infC</name>
    <name type="ordered locus">RSc1578</name>
    <name type="ORF">RS05788</name>
</gene>
<dbReference type="EMBL" id="AL646052">
    <property type="protein sequence ID" value="CAD15280.1"/>
    <property type="molecule type" value="Genomic_DNA"/>
</dbReference>
<dbReference type="SMR" id="Q8XZ28"/>
<dbReference type="STRING" id="267608.RSc1578"/>
<dbReference type="EnsemblBacteria" id="CAD15280">
    <property type="protein sequence ID" value="CAD15280"/>
    <property type="gene ID" value="RSc1578"/>
</dbReference>
<dbReference type="KEGG" id="rso:RSc1578"/>
<dbReference type="eggNOG" id="COG0290">
    <property type="taxonomic scope" value="Bacteria"/>
</dbReference>
<dbReference type="HOGENOM" id="CLU_054919_3_2_4"/>
<dbReference type="Proteomes" id="UP000001436">
    <property type="component" value="Chromosome"/>
</dbReference>
<dbReference type="GO" id="GO:0005829">
    <property type="term" value="C:cytosol"/>
    <property type="evidence" value="ECO:0007669"/>
    <property type="project" value="TreeGrafter"/>
</dbReference>
<dbReference type="GO" id="GO:0016020">
    <property type="term" value="C:membrane"/>
    <property type="evidence" value="ECO:0007669"/>
    <property type="project" value="TreeGrafter"/>
</dbReference>
<dbReference type="GO" id="GO:0043022">
    <property type="term" value="F:ribosome binding"/>
    <property type="evidence" value="ECO:0007669"/>
    <property type="project" value="TreeGrafter"/>
</dbReference>
<dbReference type="GO" id="GO:0003743">
    <property type="term" value="F:translation initiation factor activity"/>
    <property type="evidence" value="ECO:0007669"/>
    <property type="project" value="UniProtKB-UniRule"/>
</dbReference>
<dbReference type="GO" id="GO:0032790">
    <property type="term" value="P:ribosome disassembly"/>
    <property type="evidence" value="ECO:0007669"/>
    <property type="project" value="TreeGrafter"/>
</dbReference>
<dbReference type="FunFam" id="3.10.20.80:FF:000001">
    <property type="entry name" value="Translation initiation factor IF-3"/>
    <property type="match status" value="1"/>
</dbReference>
<dbReference type="FunFam" id="3.30.110.10:FF:000001">
    <property type="entry name" value="Translation initiation factor IF-3"/>
    <property type="match status" value="1"/>
</dbReference>
<dbReference type="Gene3D" id="3.30.110.10">
    <property type="entry name" value="Translation initiation factor 3 (IF-3), C-terminal domain"/>
    <property type="match status" value="1"/>
</dbReference>
<dbReference type="Gene3D" id="3.10.20.80">
    <property type="entry name" value="Translation initiation factor 3 (IF-3), N-terminal domain"/>
    <property type="match status" value="1"/>
</dbReference>
<dbReference type="HAMAP" id="MF_00080">
    <property type="entry name" value="IF_3"/>
    <property type="match status" value="1"/>
</dbReference>
<dbReference type="InterPro" id="IPR036788">
    <property type="entry name" value="T_IF-3_C_sf"/>
</dbReference>
<dbReference type="InterPro" id="IPR036787">
    <property type="entry name" value="T_IF-3_N_sf"/>
</dbReference>
<dbReference type="InterPro" id="IPR019813">
    <property type="entry name" value="Translation_initiation_fac3_CS"/>
</dbReference>
<dbReference type="InterPro" id="IPR001288">
    <property type="entry name" value="Translation_initiation_fac_3"/>
</dbReference>
<dbReference type="InterPro" id="IPR019815">
    <property type="entry name" value="Translation_initiation_fac_3_C"/>
</dbReference>
<dbReference type="InterPro" id="IPR019814">
    <property type="entry name" value="Translation_initiation_fac_3_N"/>
</dbReference>
<dbReference type="NCBIfam" id="TIGR00168">
    <property type="entry name" value="infC"/>
    <property type="match status" value="1"/>
</dbReference>
<dbReference type="PANTHER" id="PTHR10938">
    <property type="entry name" value="TRANSLATION INITIATION FACTOR IF-3"/>
    <property type="match status" value="1"/>
</dbReference>
<dbReference type="PANTHER" id="PTHR10938:SF0">
    <property type="entry name" value="TRANSLATION INITIATION FACTOR IF-3, MITOCHONDRIAL"/>
    <property type="match status" value="1"/>
</dbReference>
<dbReference type="Pfam" id="PF00707">
    <property type="entry name" value="IF3_C"/>
    <property type="match status" value="1"/>
</dbReference>
<dbReference type="Pfam" id="PF05198">
    <property type="entry name" value="IF3_N"/>
    <property type="match status" value="1"/>
</dbReference>
<dbReference type="SUPFAM" id="SSF55200">
    <property type="entry name" value="Translation initiation factor IF3, C-terminal domain"/>
    <property type="match status" value="1"/>
</dbReference>
<dbReference type="SUPFAM" id="SSF54364">
    <property type="entry name" value="Translation initiation factor IF3, N-terminal domain"/>
    <property type="match status" value="1"/>
</dbReference>
<dbReference type="PROSITE" id="PS00938">
    <property type="entry name" value="IF3"/>
    <property type="match status" value="1"/>
</dbReference>
<protein>
    <recommendedName>
        <fullName evidence="1">Translation initiation factor IF-3</fullName>
    </recommendedName>
</protein>
<keyword id="KW-0963">Cytoplasm</keyword>
<keyword id="KW-0396">Initiation factor</keyword>
<keyword id="KW-0648">Protein biosynthesis</keyword>
<keyword id="KW-1185">Reference proteome</keyword>
<accession>Q8XZ28</accession>
<sequence>MRTFNIATEKSHRINREITAPEIRLTGVEGEQLGIVKLFDALRLAEEKDVDLVEIAPTAQPPVCRLMDYGKFKYQEQKKAHEAKLKQKVIQVKEVKFRPGTDDGDYEVKLRNLKRFLDEGDRTKITLRFRGREMAHQEIGARMLDRLKTDLEEFGQVEQMPKMEGRQMVMMLAPKKRK</sequence>
<comment type="function">
    <text evidence="1">IF-3 binds to the 30S ribosomal subunit and shifts the equilibrium between 70S ribosomes and their 50S and 30S subunits in favor of the free subunits, thus enhancing the availability of 30S subunits on which protein synthesis initiation begins.</text>
</comment>
<comment type="subunit">
    <text evidence="1">Monomer.</text>
</comment>
<comment type="subcellular location">
    <subcellularLocation>
        <location evidence="1">Cytoplasm</location>
    </subcellularLocation>
</comment>
<comment type="similarity">
    <text evidence="1">Belongs to the IF-3 family.</text>
</comment>